<gene>
    <name evidence="1" type="primary">gfcR</name>
    <name type="ordered locus">Mhun_0973</name>
</gene>
<organism>
    <name type="scientific">Methanospirillum hungatei JF-1 (strain ATCC 27890 / DSM 864 / NBRC 100397 / JF-1)</name>
    <dbReference type="NCBI Taxonomy" id="323259"/>
    <lineage>
        <taxon>Archaea</taxon>
        <taxon>Methanobacteriati</taxon>
        <taxon>Methanobacteriota</taxon>
        <taxon>Stenosarchaea group</taxon>
        <taxon>Methanomicrobia</taxon>
        <taxon>Methanomicrobiales</taxon>
        <taxon>Methanospirillaceae</taxon>
        <taxon>Methanospirillum</taxon>
    </lineage>
</organism>
<comment type="domain">
    <text evidence="1">Contains an N-terminal DNA-binding winged helix-turn-helix domain and a C-terminal regulatory domain (or effector binding domain) resembling phosphoribosyltransferase (PRT) domain.</text>
</comment>
<comment type="similarity">
    <text evidence="1">Belongs to the purine/pyrimidine phosphoribosyltransferase family. GfcR subfamily.</text>
</comment>
<comment type="sequence caution" evidence="2">
    <conflict type="erroneous initiation">
        <sequence resource="EMBL-CDS" id="ABD40723"/>
    </conflict>
    <text>Extended N-terminus.</text>
</comment>
<evidence type="ECO:0000255" key="1">
    <source>
        <dbReference type="HAMAP-Rule" id="MF_01214"/>
    </source>
</evidence>
<evidence type="ECO:0000305" key="2"/>
<proteinExistence type="inferred from homology"/>
<protein>
    <recommendedName>
        <fullName evidence="1">Transcriptional regulator GfcR</fullName>
    </recommendedName>
</protein>
<feature type="chain" id="PRO_0000298904" description="Transcriptional regulator GfcR">
    <location>
        <begin position="1"/>
        <end position="198"/>
    </location>
</feature>
<keyword id="KW-0238">DNA-binding</keyword>
<keyword id="KW-1185">Reference proteome</keyword>
<keyword id="KW-0804">Transcription</keyword>
<keyword id="KW-0805">Transcription regulation</keyword>
<dbReference type="EMBL" id="CP000254">
    <property type="protein sequence ID" value="ABD40723.1"/>
    <property type="status" value="ALT_INIT"/>
    <property type="molecule type" value="Genomic_DNA"/>
</dbReference>
<dbReference type="RefSeq" id="WP_048067800.1">
    <property type="nucleotide sequence ID" value="NC_007796.1"/>
</dbReference>
<dbReference type="SMR" id="Q2FPD8"/>
<dbReference type="FunCoup" id="Q2FPD8">
    <property type="interactions" value="89"/>
</dbReference>
<dbReference type="STRING" id="323259.Mhun_0973"/>
<dbReference type="EnsemblBacteria" id="ABD40723">
    <property type="protein sequence ID" value="ABD40723"/>
    <property type="gene ID" value="Mhun_0973"/>
</dbReference>
<dbReference type="GeneID" id="3923617"/>
<dbReference type="KEGG" id="mhu:Mhun_0973"/>
<dbReference type="eggNOG" id="arCOG00028">
    <property type="taxonomic scope" value="Archaea"/>
</dbReference>
<dbReference type="HOGENOM" id="CLU_111001_0_0_2"/>
<dbReference type="InParanoid" id="Q2FPD8"/>
<dbReference type="OrthoDB" id="68893at2157"/>
<dbReference type="Proteomes" id="UP000001941">
    <property type="component" value="Chromosome"/>
</dbReference>
<dbReference type="GO" id="GO:0003677">
    <property type="term" value="F:DNA binding"/>
    <property type="evidence" value="ECO:0007669"/>
    <property type="project" value="UniProtKB-UniRule"/>
</dbReference>
<dbReference type="GO" id="GO:0004588">
    <property type="term" value="F:orotate phosphoribosyltransferase activity"/>
    <property type="evidence" value="ECO:0007669"/>
    <property type="project" value="TreeGrafter"/>
</dbReference>
<dbReference type="GO" id="GO:0019856">
    <property type="term" value="P:pyrimidine nucleobase biosynthetic process"/>
    <property type="evidence" value="ECO:0007669"/>
    <property type="project" value="TreeGrafter"/>
</dbReference>
<dbReference type="GO" id="GO:0010468">
    <property type="term" value="P:regulation of gene expression"/>
    <property type="evidence" value="ECO:0007669"/>
    <property type="project" value="UniProtKB-UniRule"/>
</dbReference>
<dbReference type="GO" id="GO:0006222">
    <property type="term" value="P:UMP biosynthetic process"/>
    <property type="evidence" value="ECO:0007669"/>
    <property type="project" value="TreeGrafter"/>
</dbReference>
<dbReference type="CDD" id="cd06223">
    <property type="entry name" value="PRTases_typeI"/>
    <property type="match status" value="1"/>
</dbReference>
<dbReference type="Gene3D" id="3.40.50.2020">
    <property type="match status" value="1"/>
</dbReference>
<dbReference type="HAMAP" id="MF_01214">
    <property type="entry name" value="GfcR"/>
    <property type="match status" value="1"/>
</dbReference>
<dbReference type="InterPro" id="IPR022854">
    <property type="entry name" value="GfcR-like"/>
</dbReference>
<dbReference type="InterPro" id="IPR000836">
    <property type="entry name" value="PRibTrfase_dom"/>
</dbReference>
<dbReference type="InterPro" id="IPR029057">
    <property type="entry name" value="PRTase-like"/>
</dbReference>
<dbReference type="NCBIfam" id="NF002620">
    <property type="entry name" value="PRK02277.1"/>
    <property type="match status" value="1"/>
</dbReference>
<dbReference type="PANTHER" id="PTHR19278">
    <property type="entry name" value="OROTATE PHOSPHORIBOSYLTRANSFERASE"/>
    <property type="match status" value="1"/>
</dbReference>
<dbReference type="PANTHER" id="PTHR19278:SF41">
    <property type="entry name" value="PYRE-LIKE PROTEIN"/>
    <property type="match status" value="1"/>
</dbReference>
<dbReference type="Pfam" id="PF00156">
    <property type="entry name" value="Pribosyltran"/>
    <property type="match status" value="1"/>
</dbReference>
<dbReference type="SUPFAM" id="SSF53271">
    <property type="entry name" value="PRTase-like"/>
    <property type="match status" value="1"/>
</dbReference>
<dbReference type="PROSITE" id="PS00103">
    <property type="entry name" value="PUR_PYR_PR_TRANSFER"/>
    <property type="match status" value="1"/>
</dbReference>
<accession>Q2FPD8</accession>
<sequence length="198" mass="21427">MSTLDELIQKARHLRSEGHSPGQIADELSLSMETVTWLLTQEKGAATPKDVHIDWTAVSGESQLLVESAQMLLSRLHLKNPEGPVPQVYVGIAISGIPLATLMAVTEGVRIGIYHPAKHAGGDEPIGSMSGNFDIHAGERIVVVDDVITSGKTLQEVINYIKRHGAVPVACCVLFDKRGIRDIDGVPVYSLFKVSRID</sequence>
<reference key="1">
    <citation type="journal article" date="2016" name="Stand. Genomic Sci.">
        <title>Complete genome sequence of Methanospirillum hungatei type strain JF1.</title>
        <authorList>
            <person name="Gunsalus R.P."/>
            <person name="Cook L.E."/>
            <person name="Crable B."/>
            <person name="Rohlin L."/>
            <person name="McDonald E."/>
            <person name="Mouttaki H."/>
            <person name="Sieber J.R."/>
            <person name="Poweleit N."/>
            <person name="Zhou H."/>
            <person name="Lapidus A.L."/>
            <person name="Daligault H.E."/>
            <person name="Land M."/>
            <person name="Gilna P."/>
            <person name="Ivanova N."/>
            <person name="Kyrpides N."/>
            <person name="Culley D.E."/>
            <person name="McInerney M.J."/>
        </authorList>
    </citation>
    <scope>NUCLEOTIDE SEQUENCE [LARGE SCALE GENOMIC DNA]</scope>
    <source>
        <strain>ATCC 27890 / DSM 864 / NBRC 100397 / JF-1</strain>
    </source>
</reference>
<name>GFCR_METHJ</name>